<name>HEMA_I30A0</name>
<accession>Q9WCD9</accession>
<evidence type="ECO:0000250" key="1">
    <source>
        <dbReference type="UniProtKB" id="Q289M7"/>
    </source>
</evidence>
<evidence type="ECO:0000255" key="2">
    <source>
        <dbReference type="HAMAP-Rule" id="MF_04072"/>
    </source>
</evidence>
<evidence type="ECO:0000305" key="3"/>
<evidence type="ECO:0007829" key="4">
    <source>
        <dbReference type="PDB" id="1RUY"/>
    </source>
</evidence>
<keyword id="KW-0002">3D-structure</keyword>
<keyword id="KW-1167">Clathrin- and caveolin-independent endocytosis of virus by host</keyword>
<keyword id="KW-1165">Clathrin-mediated endocytosis of virus by host</keyword>
<keyword id="KW-1015">Disulfide bond</keyword>
<keyword id="KW-1170">Fusion of virus membrane with host endosomal membrane</keyword>
<keyword id="KW-1168">Fusion of virus membrane with host membrane</keyword>
<keyword id="KW-0325">Glycoprotein</keyword>
<keyword id="KW-0348">Hemagglutinin</keyword>
<keyword id="KW-1032">Host cell membrane</keyword>
<keyword id="KW-1043">Host membrane</keyword>
<keyword id="KW-0945">Host-virus interaction</keyword>
<keyword id="KW-0449">Lipoprotein</keyword>
<keyword id="KW-0472">Membrane</keyword>
<keyword id="KW-0564">Palmitate</keyword>
<keyword id="KW-0732">Signal</keyword>
<keyword id="KW-0812">Transmembrane</keyword>
<keyword id="KW-1133">Transmembrane helix</keyword>
<keyword id="KW-1161">Viral attachment to host cell</keyword>
<keyword id="KW-0261">Viral envelope protein</keyword>
<keyword id="KW-1162">Viral penetration into host cytoplasm</keyword>
<keyword id="KW-0946">Virion</keyword>
<keyword id="KW-1164">Virus endocytosis by host</keyword>
<keyword id="KW-1160">Virus entry into host cell</keyword>
<comment type="function">
    <text evidence="2">Binds to sialic acid-containing receptors on the cell surface, bringing about the attachment of the virus particle to the cell. This attachment induces virion internalization either through clathrin-dependent endocytosis or through clathrin- and caveolin-independent pathway. Plays a major role in the determination of host range restriction and virulence. Class I viral fusion protein. Responsible for penetration of the virus into the cell cytoplasm by mediating the fusion of the membrane of the endocytosed virus particle with the endosomal membrane. Low pH in endosomes induces an irreversible conformational change in HA2, releasing the fusion hydrophobic peptide. Several trimers are required to form a competent fusion pore.</text>
</comment>
<comment type="subunit">
    <text evidence="1">Homotrimer of disulfide-linked HA1-HA2. Interacts with human CACNA1C.</text>
</comment>
<comment type="subcellular location">
    <subcellularLocation>
        <location evidence="2">Virion membrane</location>
        <topology evidence="2">Single-pass type I membrane protein</topology>
    </subcellularLocation>
    <subcellularLocation>
        <location evidence="2">Host apical cell membrane</location>
        <topology evidence="2">Single-pass type I membrane protein</topology>
    </subcellularLocation>
    <text evidence="2">Targeted to the apical plasma membrane in epithelial polarized cells through a signal present in the transmembrane domain. Associated with glycosphingolipid- and cholesterol-enriched detergent-resistant lipid rafts.</text>
</comment>
<comment type="PTM">
    <text evidence="2">Palmitoylated.</text>
</comment>
<comment type="PTM">
    <text evidence="2">In natural infection, inactive HA is matured into HA1 and HA2 outside the cell by one or more trypsin-like, arginine-specific endoprotease secreted by the bronchial epithelial cells. One identified protease that may be involved in this process is secreted in lungs by club cells.</text>
</comment>
<comment type="miscellaneous">
    <text>Major glycoprotein, comprises over 80% of the envelope proteins present in virus particle.</text>
</comment>
<comment type="miscellaneous">
    <text>The extent of infection into host organism is determined by HA. Influenza viruses bud from the apical surface of polarized epithelial cells (e.g. bronchial epithelial cells) into lumen of lungs and are therefore usually pneumotropic. The reason is that HA is cleaved by tryptase clara which is restricted to lungs. However, HAs of H5 and H7 pantropic avian viruses subtypes can be cleaved by furin and subtilisin-type enzymes, allowing the virus to grow in other organs than lungs.</text>
</comment>
<comment type="miscellaneous">
    <text evidence="3">The influenza A genome consist of 8 RNA segments. Genetic variation of hemagglutinin and/or neuraminidase genes results in the emergence of new influenza strains. The mechanism of variation can be the result of point mutations or the result of genetic reassortment between segments of two different strains.</text>
</comment>
<comment type="similarity">
    <text evidence="2">Belongs to the influenza viruses hemagglutinin family.</text>
</comment>
<dbReference type="EMBL" id="AF091308">
    <property type="protein sequence ID" value="AAD25303.1"/>
    <property type="molecule type" value="mRNA"/>
</dbReference>
<dbReference type="PDB" id="1RUY">
    <property type="method" value="X-ray"/>
    <property type="resolution" value="2.70 A"/>
    <property type="chains" value="H/J/L=18-339"/>
</dbReference>
<dbReference type="PDBsum" id="1RUY"/>
<dbReference type="SMR" id="Q9WCD9"/>
<dbReference type="GlyCosmos" id="Q9WCD9">
    <property type="glycosylation" value="6 sites, No reported glycans"/>
</dbReference>
<dbReference type="ABCD" id="Q9WCD9">
    <property type="antibodies" value="7 sequenced antibodies"/>
</dbReference>
<dbReference type="EvolutionaryTrace" id="Q9WCD9"/>
<dbReference type="GO" id="GO:0020002">
    <property type="term" value="C:host cell plasma membrane"/>
    <property type="evidence" value="ECO:0007669"/>
    <property type="project" value="UniProtKB-SubCell"/>
</dbReference>
<dbReference type="GO" id="GO:0016020">
    <property type="term" value="C:membrane"/>
    <property type="evidence" value="ECO:0007669"/>
    <property type="project" value="UniProtKB-UniRule"/>
</dbReference>
<dbReference type="GO" id="GO:0019031">
    <property type="term" value="C:viral envelope"/>
    <property type="evidence" value="ECO:0007669"/>
    <property type="project" value="UniProtKB-UniRule"/>
</dbReference>
<dbReference type="GO" id="GO:0055036">
    <property type="term" value="C:virion membrane"/>
    <property type="evidence" value="ECO:0007669"/>
    <property type="project" value="UniProtKB-SubCell"/>
</dbReference>
<dbReference type="GO" id="GO:0046789">
    <property type="term" value="F:host cell surface receptor binding"/>
    <property type="evidence" value="ECO:0007669"/>
    <property type="project" value="UniProtKB-UniRule"/>
</dbReference>
<dbReference type="GO" id="GO:0075512">
    <property type="term" value="P:clathrin-dependent endocytosis of virus by host cell"/>
    <property type="evidence" value="ECO:0007669"/>
    <property type="project" value="UniProtKB-UniRule"/>
</dbReference>
<dbReference type="GO" id="GO:0039654">
    <property type="term" value="P:fusion of virus membrane with host endosome membrane"/>
    <property type="evidence" value="ECO:0007669"/>
    <property type="project" value="UniProtKB-UniRule"/>
</dbReference>
<dbReference type="GO" id="GO:0019064">
    <property type="term" value="P:fusion of virus membrane with host plasma membrane"/>
    <property type="evidence" value="ECO:0007669"/>
    <property type="project" value="InterPro"/>
</dbReference>
<dbReference type="GO" id="GO:0046761">
    <property type="term" value="P:viral budding from plasma membrane"/>
    <property type="evidence" value="ECO:0007669"/>
    <property type="project" value="UniProtKB-UniRule"/>
</dbReference>
<dbReference type="GO" id="GO:0019062">
    <property type="term" value="P:virion attachment to host cell"/>
    <property type="evidence" value="ECO:0007669"/>
    <property type="project" value="UniProtKB-KW"/>
</dbReference>
<dbReference type="Gene3D" id="3.90.20.10">
    <property type="match status" value="1"/>
</dbReference>
<dbReference type="Gene3D" id="3.90.209.20">
    <property type="match status" value="1"/>
</dbReference>
<dbReference type="Gene3D" id="2.10.77.10">
    <property type="entry name" value="Hemagglutinin Chain A, Domain 2"/>
    <property type="match status" value="1"/>
</dbReference>
<dbReference type="HAMAP" id="MF_04072">
    <property type="entry name" value="INFV_HEMA"/>
    <property type="match status" value="1"/>
</dbReference>
<dbReference type="InterPro" id="IPR008980">
    <property type="entry name" value="Capsid_hemagglutn"/>
</dbReference>
<dbReference type="InterPro" id="IPR013828">
    <property type="entry name" value="Hemagglutn_HA1_a/b_dom_sf"/>
</dbReference>
<dbReference type="InterPro" id="IPR000149">
    <property type="entry name" value="Hemagglutn_influenz_A"/>
</dbReference>
<dbReference type="InterPro" id="IPR001364">
    <property type="entry name" value="Hemagglutn_influenz_A/B"/>
</dbReference>
<dbReference type="Pfam" id="PF00509">
    <property type="entry name" value="Hemagglutinin"/>
    <property type="match status" value="1"/>
</dbReference>
<dbReference type="PRINTS" id="PR00330">
    <property type="entry name" value="HEMAGGLUTN1"/>
</dbReference>
<dbReference type="PRINTS" id="PR00329">
    <property type="entry name" value="HEMAGGLUTN12"/>
</dbReference>
<dbReference type="SUPFAM" id="SSF58064">
    <property type="entry name" value="Influenza hemagglutinin (stalk)"/>
    <property type="match status" value="1"/>
</dbReference>
<dbReference type="SUPFAM" id="SSF49818">
    <property type="entry name" value="Viral protein domain"/>
    <property type="match status" value="1"/>
</dbReference>
<organism>
    <name type="scientific">Influenza A virus (strain A/Swine/Iowa/15/1930 H1N1)</name>
    <dbReference type="NCBI Taxonomy" id="380342"/>
    <lineage>
        <taxon>Viruses</taxon>
        <taxon>Riboviria</taxon>
        <taxon>Orthornavirae</taxon>
        <taxon>Negarnaviricota</taxon>
        <taxon>Polyploviricotina</taxon>
        <taxon>Insthoviricetes</taxon>
        <taxon>Articulavirales</taxon>
        <taxon>Orthomyxoviridae</taxon>
        <taxon>Alphainfluenzavirus</taxon>
        <taxon>Alphainfluenzavirus influenzae</taxon>
        <taxon>Influenza A virus</taxon>
    </lineage>
</organism>
<feature type="signal peptide" evidence="2">
    <location>
        <begin position="1"/>
        <end position="17"/>
    </location>
</feature>
<feature type="chain" id="PRO_0000440373" description="Hemagglutinin" evidence="2">
    <location>
        <begin position="18"/>
        <end position="566"/>
    </location>
</feature>
<feature type="chain" id="PRO_5000055153" description="Hemagglutinin HA1 chain" evidence="2">
    <location>
        <begin position="18"/>
        <end position="343"/>
    </location>
</feature>
<feature type="chain" id="PRO_5000055154" description="Hemagglutinin HA2 chain" evidence="2">
    <location>
        <begin position="345"/>
        <end position="566"/>
    </location>
</feature>
<feature type="topological domain" description="Extracellular" evidence="2">
    <location>
        <begin position="18"/>
        <end position="529"/>
    </location>
</feature>
<feature type="transmembrane region" description="Helical" evidence="2">
    <location>
        <begin position="530"/>
        <end position="550"/>
    </location>
</feature>
<feature type="topological domain" description="Cytoplasmic" evidence="2">
    <location>
        <begin position="551"/>
        <end position="566"/>
    </location>
</feature>
<feature type="site" description="Cleavage; by host" evidence="2">
    <location>
        <begin position="344"/>
        <end position="345"/>
    </location>
</feature>
<feature type="lipid moiety-binding region" description="S-palmitoyl cysteine; by host" evidence="2">
    <location>
        <position position="555"/>
    </location>
</feature>
<feature type="lipid moiety-binding region" description="S-palmitoyl cysteine; by host" evidence="2">
    <location>
        <position position="562"/>
    </location>
</feature>
<feature type="lipid moiety-binding region" description="S-palmitoyl cysteine; by host" evidence="2">
    <location>
        <position position="565"/>
    </location>
</feature>
<feature type="glycosylation site" description="N-linked (GlcNAc...) asparagine; by host" evidence="2">
    <location>
        <position position="27"/>
    </location>
</feature>
<feature type="glycosylation site" description="N-linked (GlcNAc...) asparagine; by host" evidence="2">
    <location>
        <position position="28"/>
    </location>
</feature>
<feature type="glycosylation site" description="N-linked (GlcNAc...) asparagine; by host" evidence="2">
    <location>
        <position position="40"/>
    </location>
</feature>
<feature type="glycosylation site" description="N-linked (GlcNAc...) asparagine; by host" evidence="2">
    <location>
        <position position="104"/>
    </location>
</feature>
<feature type="glycosylation site" description="N-linked (GlcNAc...) asparagine; by host" evidence="2">
    <location>
        <position position="304"/>
    </location>
</feature>
<feature type="glycosylation site" description="N-linked (GlcNAc...) asparagine; by host" evidence="2">
    <location>
        <position position="498"/>
    </location>
</feature>
<feature type="disulfide bond" description="Interchain (between HA1 and HA2 chains)" evidence="2">
    <location>
        <begin position="21"/>
        <end position="481"/>
    </location>
</feature>
<feature type="disulfide bond" evidence="2">
    <location>
        <begin position="59"/>
        <end position="292"/>
    </location>
</feature>
<feature type="disulfide bond" evidence="2">
    <location>
        <begin position="72"/>
        <end position="84"/>
    </location>
</feature>
<feature type="disulfide bond" evidence="2">
    <location>
        <begin position="107"/>
        <end position="153"/>
    </location>
</feature>
<feature type="disulfide bond" evidence="2">
    <location>
        <begin position="296"/>
        <end position="320"/>
    </location>
</feature>
<feature type="disulfide bond" evidence="2">
    <location>
        <begin position="488"/>
        <end position="492"/>
    </location>
</feature>
<feature type="strand" evidence="4">
    <location>
        <begin position="19"/>
        <end position="25"/>
    </location>
</feature>
<feature type="strand" evidence="4">
    <location>
        <begin position="39"/>
        <end position="44"/>
    </location>
</feature>
<feature type="strand" evidence="4">
    <location>
        <begin position="46"/>
        <end position="48"/>
    </location>
</feature>
<feature type="strand" evidence="4">
    <location>
        <begin position="58"/>
        <end position="61"/>
    </location>
</feature>
<feature type="strand" evidence="4">
    <location>
        <begin position="67"/>
        <end position="70"/>
    </location>
</feature>
<feature type="helix" evidence="4">
    <location>
        <begin position="74"/>
        <end position="79"/>
    </location>
</feature>
<feature type="helix" evidence="4">
    <location>
        <begin position="82"/>
        <end position="89"/>
    </location>
</feature>
<feature type="strand" evidence="4">
    <location>
        <begin position="96"/>
        <end position="98"/>
    </location>
</feature>
<feature type="helix" evidence="4">
    <location>
        <begin position="115"/>
        <end position="122"/>
    </location>
</feature>
<feature type="strand" evidence="4">
    <location>
        <begin position="125"/>
        <end position="131"/>
    </location>
</feature>
<feature type="turn" evidence="4">
    <location>
        <begin position="136"/>
        <end position="138"/>
    </location>
</feature>
<feature type="strand" evidence="4">
    <location>
        <begin position="150"/>
        <end position="155"/>
    </location>
</feature>
<feature type="strand" evidence="4">
    <location>
        <begin position="158"/>
        <end position="160"/>
    </location>
</feature>
<feature type="strand" evidence="4">
    <location>
        <begin position="163"/>
        <end position="167"/>
    </location>
</feature>
<feature type="strand" evidence="4">
    <location>
        <begin position="178"/>
        <end position="183"/>
    </location>
</feature>
<feature type="strand" evidence="4">
    <location>
        <begin position="186"/>
        <end position="188"/>
    </location>
</feature>
<feature type="strand" evidence="4">
    <location>
        <begin position="190"/>
        <end position="198"/>
    </location>
</feature>
<feature type="helix" evidence="4">
    <location>
        <begin position="202"/>
        <end position="209"/>
    </location>
</feature>
<feature type="strand" evidence="4">
    <location>
        <begin position="216"/>
        <end position="219"/>
    </location>
</feature>
<feature type="strand" evidence="4">
    <location>
        <begin position="224"/>
        <end position="227"/>
    </location>
</feature>
<feature type="strand" evidence="4">
    <location>
        <begin position="240"/>
        <end position="251"/>
    </location>
</feature>
<feature type="strand" evidence="4">
    <location>
        <begin position="256"/>
        <end position="263"/>
    </location>
</feature>
<feature type="strand" evidence="4">
    <location>
        <begin position="265"/>
        <end position="268"/>
    </location>
</feature>
<feature type="strand" evidence="4">
    <location>
        <begin position="271"/>
        <end position="276"/>
    </location>
</feature>
<feature type="strand" evidence="4">
    <location>
        <begin position="282"/>
        <end position="284"/>
    </location>
</feature>
<feature type="strand" evidence="4">
    <location>
        <begin position="289"/>
        <end position="293"/>
    </location>
</feature>
<feature type="strand" evidence="4">
    <location>
        <begin position="295"/>
        <end position="298"/>
    </location>
</feature>
<feature type="strand" evidence="4">
    <location>
        <begin position="301"/>
        <end position="303"/>
    </location>
</feature>
<feature type="strand" evidence="4">
    <location>
        <begin position="308"/>
        <end position="310"/>
    </location>
</feature>
<feature type="strand" evidence="4">
    <location>
        <begin position="316"/>
        <end position="320"/>
    </location>
</feature>
<feature type="strand" evidence="4">
    <location>
        <begin position="330"/>
        <end position="332"/>
    </location>
</feature>
<sequence>MKAILLVLLCAFAATNADTLCIGYHANNSTDTVDTVLEKNVTVTHSVNLLEDSHNGKLCRLGGIAPLQLGKCNIAGXXLGNPECDLLLTVSSWSYIVETSNSDNGTCYPGDFIDYEELREQLSSVSSFEKFEIFPKTSSWPNHETTRGVTAACPYAGASSFYRNLLWLVKKENSYPKLSKSYVNNKGKEVLVLWGVHHPPTSTDQQSLYQNADAYVSVGSSKYDRRFTPEIAARPKVRGQAGRMNYYWTLLEPGDTITFEATGNLVAPRYAFALNRGSESGIITSDAPVHDCDTKCQTPHGAINSSLPFQNIHPVTIGECPKYVKSTKLRMVTGLRNIPSIQSRGLFGAIAGFIEGGWTGLIDGWYGYHHQNGQGSGYAADQKSTQNAIDGITNKVNSVIEKMNTQFTVVGKEFNNLERRIKNLNKKVDDGFLDVWTYNAEMLVLLENERTLDFHDSNVKNLYEKARSQLRNNAKEIGNGCFEFYHKCDDACMESVRNGTYDYPKYSEESKLNREEIDGVKLESMMVYQILAIYSTVASSLVLLVSLGAISFWMCSNGSLQCRICI</sequence>
<reference key="1">
    <citation type="journal article" date="1998" name="J. Virol.">
        <title>Molecular basis for the generation in pigs of influenza A viruses with pandemic potential.</title>
        <authorList>
            <person name="Ito T."/>
            <person name="Couceiro J.N."/>
            <person name="Kelm S."/>
            <person name="Baum L.G."/>
            <person name="Krauss S."/>
            <person name="Castrucci M.R."/>
            <person name="Donatelli I."/>
            <person name="Kida H."/>
            <person name="Paulson J.C."/>
            <person name="Webster R.G."/>
            <person name="Kawaoka Y."/>
        </authorList>
    </citation>
    <scope>NUCLEOTIDE SEQUENCE [MRNA]</scope>
</reference>
<gene>
    <name evidence="2" type="primary">HA</name>
</gene>
<organismHost>
    <name type="scientific">Aves</name>
    <dbReference type="NCBI Taxonomy" id="8782"/>
</organismHost>
<organismHost>
    <name type="scientific">Homo sapiens</name>
    <name type="common">Human</name>
    <dbReference type="NCBI Taxonomy" id="9606"/>
</organismHost>
<organismHost>
    <name type="scientific">Sus scrofa</name>
    <name type="common">Pig</name>
    <dbReference type="NCBI Taxonomy" id="9823"/>
</organismHost>
<protein>
    <recommendedName>
        <fullName evidence="2">Hemagglutinin</fullName>
    </recommendedName>
    <component>
        <recommendedName>
            <fullName evidence="2">Hemagglutinin HA1 chain</fullName>
        </recommendedName>
    </component>
    <component>
        <recommendedName>
            <fullName evidence="2">Hemagglutinin HA2 chain</fullName>
        </recommendedName>
    </component>
</protein>
<proteinExistence type="evidence at protein level"/>